<name>PANB_STRCO</name>
<comment type="function">
    <text evidence="1">Catalyzes the reversible reaction in which hydroxymethyl group from 5,10-methylenetetrahydrofolate is transferred onto alpha-ketoisovalerate to form ketopantoate.</text>
</comment>
<comment type="catalytic activity">
    <reaction evidence="1">
        <text>3-methyl-2-oxobutanoate + (6R)-5,10-methylene-5,6,7,8-tetrahydrofolate + H2O = 2-dehydropantoate + (6S)-5,6,7,8-tetrahydrofolate</text>
        <dbReference type="Rhea" id="RHEA:11824"/>
        <dbReference type="ChEBI" id="CHEBI:11561"/>
        <dbReference type="ChEBI" id="CHEBI:11851"/>
        <dbReference type="ChEBI" id="CHEBI:15377"/>
        <dbReference type="ChEBI" id="CHEBI:15636"/>
        <dbReference type="ChEBI" id="CHEBI:57453"/>
        <dbReference type="EC" id="2.1.2.11"/>
    </reaction>
</comment>
<comment type="cofactor">
    <cofactor evidence="1">
        <name>Mg(2+)</name>
        <dbReference type="ChEBI" id="CHEBI:18420"/>
    </cofactor>
    <text evidence="1">Binds 1 Mg(2+) ion per subunit.</text>
</comment>
<comment type="pathway">
    <text evidence="1">Cofactor biosynthesis; (R)-pantothenate biosynthesis; (R)-pantoate from 3-methyl-2-oxobutanoate: step 1/2.</text>
</comment>
<comment type="subunit">
    <text evidence="1">Homodecamer; pentamer of dimers.</text>
</comment>
<comment type="subcellular location">
    <subcellularLocation>
        <location evidence="1">Cytoplasm</location>
    </subcellularLocation>
</comment>
<comment type="similarity">
    <text evidence="1">Belongs to the PanB family.</text>
</comment>
<evidence type="ECO:0000255" key="1">
    <source>
        <dbReference type="HAMAP-Rule" id="MF_00156"/>
    </source>
</evidence>
<evidence type="ECO:0000256" key="2">
    <source>
        <dbReference type="SAM" id="MobiDB-lite"/>
    </source>
</evidence>
<proteinExistence type="inferred from homology"/>
<gene>
    <name evidence="1" type="primary">panB</name>
    <name type="ordered locus">SCO2256</name>
    <name type="ORF">SCC75A.02</name>
</gene>
<keyword id="KW-0963">Cytoplasm</keyword>
<keyword id="KW-0460">Magnesium</keyword>
<keyword id="KW-0479">Metal-binding</keyword>
<keyword id="KW-0566">Pantothenate biosynthesis</keyword>
<keyword id="KW-1185">Reference proteome</keyword>
<keyword id="KW-0808">Transferase</keyword>
<feature type="chain" id="PRO_0000184897" description="3-methyl-2-oxobutanoate hydroxymethyltransferase">
    <location>
        <begin position="1"/>
        <end position="291"/>
    </location>
</feature>
<feature type="region of interest" description="Disordered" evidence="2">
    <location>
        <begin position="1"/>
        <end position="20"/>
    </location>
</feature>
<feature type="compositionally biased region" description="Polar residues" evidence="2">
    <location>
        <begin position="1"/>
        <end position="10"/>
    </location>
</feature>
<feature type="active site" description="Proton acceptor" evidence="1">
    <location>
        <position position="208"/>
    </location>
</feature>
<feature type="binding site" evidence="1">
    <location>
        <begin position="71"/>
        <end position="72"/>
    </location>
    <ligand>
        <name>3-methyl-2-oxobutanoate</name>
        <dbReference type="ChEBI" id="CHEBI:11851"/>
    </ligand>
</feature>
<feature type="binding site" evidence="1">
    <location>
        <position position="71"/>
    </location>
    <ligand>
        <name>Mg(2+)</name>
        <dbReference type="ChEBI" id="CHEBI:18420"/>
    </ligand>
</feature>
<feature type="binding site" evidence="1">
    <location>
        <position position="110"/>
    </location>
    <ligand>
        <name>3-methyl-2-oxobutanoate</name>
        <dbReference type="ChEBI" id="CHEBI:11851"/>
    </ligand>
</feature>
<feature type="binding site" evidence="1">
    <location>
        <position position="110"/>
    </location>
    <ligand>
        <name>Mg(2+)</name>
        <dbReference type="ChEBI" id="CHEBI:18420"/>
    </ligand>
</feature>
<feature type="binding site" evidence="1">
    <location>
        <position position="140"/>
    </location>
    <ligand>
        <name>3-methyl-2-oxobutanoate</name>
        <dbReference type="ChEBI" id="CHEBI:11851"/>
    </ligand>
</feature>
<feature type="binding site" evidence="1">
    <location>
        <position position="142"/>
    </location>
    <ligand>
        <name>Mg(2+)</name>
        <dbReference type="ChEBI" id="CHEBI:18420"/>
    </ligand>
</feature>
<protein>
    <recommendedName>
        <fullName evidence="1">3-methyl-2-oxobutanoate hydroxymethyltransferase</fullName>
        <ecNumber evidence="1">2.1.2.11</ecNumber>
    </recommendedName>
    <alternativeName>
        <fullName evidence="1">Ketopantoate hydroxymethyltransferase</fullName>
        <shortName evidence="1">KPHMT</shortName>
    </alternativeName>
</protein>
<sequence>MTQLSAAQTPQPKPADGNRALYGGKINRRITVRDITAAKERGEKWPMLTAYDAMTASVFDESGIPVMLVGDSAGNCHLGYETTVPVTLDEMTMLSAAVVRGTSRALIVGDLPFGSYQEGPVQALRSATRLVKEAGVGAVKLEGGERSHRQIELLVESGIPVMAHIGLTPQSVNSMGYRVQGRGEEAAQQLLRDAKAVQDAGAFAVVLELVPAELAAEVTRTLHIPTVGIGAGPDTDAQVLVWTDMLGLTGGRMPKFVKQYADLRKVMGDAAKAYAEDVVGGTFPADEHSVH</sequence>
<organism>
    <name type="scientific">Streptomyces coelicolor (strain ATCC BAA-471 / A3(2) / M145)</name>
    <dbReference type="NCBI Taxonomy" id="100226"/>
    <lineage>
        <taxon>Bacteria</taxon>
        <taxon>Bacillati</taxon>
        <taxon>Actinomycetota</taxon>
        <taxon>Actinomycetes</taxon>
        <taxon>Kitasatosporales</taxon>
        <taxon>Streptomycetaceae</taxon>
        <taxon>Streptomyces</taxon>
        <taxon>Streptomyces albidoflavus group</taxon>
    </lineage>
</organism>
<reference key="1">
    <citation type="journal article" date="2002" name="Nature">
        <title>Complete genome sequence of the model actinomycete Streptomyces coelicolor A3(2).</title>
        <authorList>
            <person name="Bentley S.D."/>
            <person name="Chater K.F."/>
            <person name="Cerdeno-Tarraga A.-M."/>
            <person name="Challis G.L."/>
            <person name="Thomson N.R."/>
            <person name="James K.D."/>
            <person name="Harris D.E."/>
            <person name="Quail M.A."/>
            <person name="Kieser H."/>
            <person name="Harper D."/>
            <person name="Bateman A."/>
            <person name="Brown S."/>
            <person name="Chandra G."/>
            <person name="Chen C.W."/>
            <person name="Collins M."/>
            <person name="Cronin A."/>
            <person name="Fraser A."/>
            <person name="Goble A."/>
            <person name="Hidalgo J."/>
            <person name="Hornsby T."/>
            <person name="Howarth S."/>
            <person name="Huang C.-H."/>
            <person name="Kieser T."/>
            <person name="Larke L."/>
            <person name="Murphy L.D."/>
            <person name="Oliver K."/>
            <person name="O'Neil S."/>
            <person name="Rabbinowitsch E."/>
            <person name="Rajandream M.A."/>
            <person name="Rutherford K.M."/>
            <person name="Rutter S."/>
            <person name="Seeger K."/>
            <person name="Saunders D."/>
            <person name="Sharp S."/>
            <person name="Squares R."/>
            <person name="Squares S."/>
            <person name="Taylor K."/>
            <person name="Warren T."/>
            <person name="Wietzorrek A."/>
            <person name="Woodward J.R."/>
            <person name="Barrell B.G."/>
            <person name="Parkhill J."/>
            <person name="Hopwood D.A."/>
        </authorList>
    </citation>
    <scope>NUCLEOTIDE SEQUENCE [LARGE SCALE GENOMIC DNA]</scope>
    <source>
        <strain>ATCC BAA-471 / A3(2) / M145</strain>
    </source>
</reference>
<accession>Q9RKS2</accession>
<dbReference type="EC" id="2.1.2.11" evidence="1"/>
<dbReference type="EMBL" id="AL939112">
    <property type="protein sequence ID" value="CAB61702.1"/>
    <property type="molecule type" value="Genomic_DNA"/>
</dbReference>
<dbReference type="PIR" id="T50565">
    <property type="entry name" value="T50565"/>
</dbReference>
<dbReference type="RefSeq" id="NP_626504.1">
    <property type="nucleotide sequence ID" value="NC_003888.3"/>
</dbReference>
<dbReference type="RefSeq" id="WP_003976556.1">
    <property type="nucleotide sequence ID" value="NZ_VNID01000001.1"/>
</dbReference>
<dbReference type="SMR" id="Q9RKS2"/>
<dbReference type="FunCoup" id="Q9RKS2">
    <property type="interactions" value="197"/>
</dbReference>
<dbReference type="STRING" id="100226.gene:17759853"/>
<dbReference type="PaxDb" id="100226-SCO2256"/>
<dbReference type="KEGG" id="sco:SCO2256"/>
<dbReference type="PATRIC" id="fig|100226.15.peg.2293"/>
<dbReference type="eggNOG" id="COG0413">
    <property type="taxonomic scope" value="Bacteria"/>
</dbReference>
<dbReference type="HOGENOM" id="CLU_036645_1_0_11"/>
<dbReference type="InParanoid" id="Q9RKS2"/>
<dbReference type="OrthoDB" id="9781789at2"/>
<dbReference type="PhylomeDB" id="Q9RKS2"/>
<dbReference type="UniPathway" id="UPA00028">
    <property type="reaction ID" value="UER00003"/>
</dbReference>
<dbReference type="Proteomes" id="UP000001973">
    <property type="component" value="Chromosome"/>
</dbReference>
<dbReference type="GO" id="GO:0005737">
    <property type="term" value="C:cytoplasm"/>
    <property type="evidence" value="ECO:0000318"/>
    <property type="project" value="GO_Central"/>
</dbReference>
<dbReference type="GO" id="GO:0003864">
    <property type="term" value="F:3-methyl-2-oxobutanoate hydroxymethyltransferase activity"/>
    <property type="evidence" value="ECO:0000318"/>
    <property type="project" value="GO_Central"/>
</dbReference>
<dbReference type="GO" id="GO:0000287">
    <property type="term" value="F:magnesium ion binding"/>
    <property type="evidence" value="ECO:0000318"/>
    <property type="project" value="GO_Central"/>
</dbReference>
<dbReference type="GO" id="GO:0015940">
    <property type="term" value="P:pantothenate biosynthetic process"/>
    <property type="evidence" value="ECO:0000318"/>
    <property type="project" value="GO_Central"/>
</dbReference>
<dbReference type="CDD" id="cd06557">
    <property type="entry name" value="KPHMT-like"/>
    <property type="match status" value="1"/>
</dbReference>
<dbReference type="FunFam" id="3.20.20.60:FF:000003">
    <property type="entry name" value="3-methyl-2-oxobutanoate hydroxymethyltransferase"/>
    <property type="match status" value="1"/>
</dbReference>
<dbReference type="Gene3D" id="3.20.20.60">
    <property type="entry name" value="Phosphoenolpyruvate-binding domains"/>
    <property type="match status" value="1"/>
</dbReference>
<dbReference type="HAMAP" id="MF_00156">
    <property type="entry name" value="PanB"/>
    <property type="match status" value="1"/>
</dbReference>
<dbReference type="InterPro" id="IPR003700">
    <property type="entry name" value="Pantoate_hydroxy_MeTrfase"/>
</dbReference>
<dbReference type="InterPro" id="IPR015813">
    <property type="entry name" value="Pyrv/PenolPyrv_kinase-like_dom"/>
</dbReference>
<dbReference type="InterPro" id="IPR040442">
    <property type="entry name" value="Pyrv_kinase-like_dom_sf"/>
</dbReference>
<dbReference type="NCBIfam" id="TIGR00222">
    <property type="entry name" value="panB"/>
    <property type="match status" value="1"/>
</dbReference>
<dbReference type="NCBIfam" id="NF001452">
    <property type="entry name" value="PRK00311.1"/>
    <property type="match status" value="1"/>
</dbReference>
<dbReference type="PANTHER" id="PTHR20881">
    <property type="entry name" value="3-METHYL-2-OXOBUTANOATE HYDROXYMETHYLTRANSFERASE"/>
    <property type="match status" value="1"/>
</dbReference>
<dbReference type="PANTHER" id="PTHR20881:SF0">
    <property type="entry name" value="3-METHYL-2-OXOBUTANOATE HYDROXYMETHYLTRANSFERASE"/>
    <property type="match status" value="1"/>
</dbReference>
<dbReference type="Pfam" id="PF02548">
    <property type="entry name" value="Pantoate_transf"/>
    <property type="match status" value="1"/>
</dbReference>
<dbReference type="PIRSF" id="PIRSF000388">
    <property type="entry name" value="Pantoate_hydroxy_MeTrfase"/>
    <property type="match status" value="1"/>
</dbReference>
<dbReference type="SUPFAM" id="SSF51621">
    <property type="entry name" value="Phosphoenolpyruvate/pyruvate domain"/>
    <property type="match status" value="1"/>
</dbReference>